<organism>
    <name type="scientific">Arabidopsis thaliana</name>
    <name type="common">Mouse-ear cress</name>
    <dbReference type="NCBI Taxonomy" id="3702"/>
    <lineage>
        <taxon>Eukaryota</taxon>
        <taxon>Viridiplantae</taxon>
        <taxon>Streptophyta</taxon>
        <taxon>Embryophyta</taxon>
        <taxon>Tracheophyta</taxon>
        <taxon>Spermatophyta</taxon>
        <taxon>Magnoliopsida</taxon>
        <taxon>eudicotyledons</taxon>
        <taxon>Gunneridae</taxon>
        <taxon>Pentapetalae</taxon>
        <taxon>rosids</taxon>
        <taxon>malvids</taxon>
        <taxon>Brassicales</taxon>
        <taxon>Brassicaceae</taxon>
        <taxon>Camelineae</taxon>
        <taxon>Arabidopsis</taxon>
    </lineage>
</organism>
<sequence>MDSNNSKKGSSVKSPCQTPRSTEKSNRDFRVDSNSNSNPVSKNEKEKGVNIQVIVRCRPFNSEETRLQTPAVLTCNDRKKEVAVAQNIAGKQIDKTFLFDKVFGPTSQQKDLYHQAVSPIVFEVLDGYNCTIFAYGQTGTGKTYTMEGGARKKNGEIPSDAGVIPRAVKQIFDILEAQSAAEYSLKVSFLELYNEELTDLLAPEETKFADDKSKKPLALMEDGKGGVFVRGLEEEIVSTADEIYKVLEKGSAKRRTAETLLNKQSSRSHSIFSVTIHIKECTPEGEEIVKSGKLNLVDLAGSENISRSGAREGRAREAGEINKSLLTLGRVINALVEHSGHIPYRESKLTRLLRDSLGGKTKTCVIATVSPSVHCLEETLSTLDYAHRAKHIKNKPEVNQKMMKSAIMKDLYSEIERLKQEVYAAREKNGIYIPKERYTQEEAEKKAMADKIEQMEVEGEAKDKQIIDLQELYNSEQLVTAGLREKLDKTEKKLYETEQALLDLEEKHRQAVATIKEKEYLISNLLKSEKTLVDRAVELQAELANAASDVSNLFAKIGRKDKIEDSNRSLIQDFQSQLLRQLELLNNSVAGSVSQQEKQLQDMENVMVSFVSAKTKATETLRGSLAQLKEKYNTGIKSLDDIAGNLDKDSQSTLNDLNSEVTKHSCALEDMFKGFTSEAYTLLEGLQGSLHNQEEKLSAFTQQQRDLHSRSMDSAKSVSTVMLDFFKTLDTHANKLTKLAEDAQNVNEQKLSAFTKKFEESIANEEKQMLEKVAELLASSNARKKELVQIAVQDIRQGSSSQTGALQQEMSAMQDSASSIKVQWNSHIVQAESHHLDNISAVEVAKEDMQKMHLKCLENSKTGTQQWKTAQESLVDLEKRNVATADSIIRGAIENNEKLRTQFSSAVSTTLSDVDSSNREIISSIDNSLQLDKDASTDVNSTIVPCSENLKELRTHHDDNVVEIKQNTGKCLGHEYKVDEATSSTPRKREYNIPTVGSIEELKTPSFEELLKAFHDCKSPKQMQNGEAKHVSNGRPPLTAIN</sequence>
<evidence type="ECO:0000250" key="1">
    <source>
        <dbReference type="UniProtKB" id="O23826"/>
    </source>
</evidence>
<evidence type="ECO:0000255" key="2"/>
<evidence type="ECO:0000255" key="3">
    <source>
        <dbReference type="PROSITE-ProRule" id="PRU00283"/>
    </source>
</evidence>
<evidence type="ECO:0000256" key="4">
    <source>
        <dbReference type="SAM" id="MobiDB-lite"/>
    </source>
</evidence>
<evidence type="ECO:0000269" key="5">
    <source>
    </source>
</evidence>
<evidence type="ECO:0000269" key="6">
    <source>
    </source>
</evidence>
<evidence type="ECO:0000269" key="7">
    <source>
    </source>
</evidence>
<evidence type="ECO:0000303" key="8">
    <source>
    </source>
</evidence>
<evidence type="ECO:0000303" key="9">
    <source>
    </source>
</evidence>
<evidence type="ECO:0000303" key="10">
    <source>
    </source>
</evidence>
<evidence type="ECO:0000303" key="11">
    <source>
    </source>
</evidence>
<evidence type="ECO:0000305" key="12"/>
<evidence type="ECO:0000312" key="13">
    <source>
        <dbReference type="Araport" id="AT2G28620"/>
    </source>
</evidence>
<evidence type="ECO:0000312" key="14">
    <source>
        <dbReference type="EMBL" id="AAD24373.1"/>
    </source>
</evidence>
<keyword id="KW-0067">ATP-binding</keyword>
<keyword id="KW-0175">Coiled coil</keyword>
<keyword id="KW-0963">Cytoplasm</keyword>
<keyword id="KW-0206">Cytoskeleton</keyword>
<keyword id="KW-0493">Microtubule</keyword>
<keyword id="KW-0505">Motor protein</keyword>
<keyword id="KW-0547">Nucleotide-binding</keyword>
<keyword id="KW-1185">Reference proteome</keyword>
<proteinExistence type="evidence at protein level"/>
<accession>F4IIS5</accession>
<accession>Q9SIB3</accession>
<gene>
    <name evidence="12" type="primary">KIN5A</name>
    <name evidence="11" type="synonym">LPH</name>
    <name evidence="9" type="synonym">RSW7</name>
    <name evidence="13" type="ordered locus">At2g28620</name>
    <name evidence="14" type="ORF">T8O18.9</name>
</gene>
<reference key="1">
    <citation type="journal article" date="1999" name="Nature">
        <title>Sequence and analysis of chromosome 2 of the plant Arabidopsis thaliana.</title>
        <authorList>
            <person name="Lin X."/>
            <person name="Kaul S."/>
            <person name="Rounsley S.D."/>
            <person name="Shea T.P."/>
            <person name="Benito M.-I."/>
            <person name="Town C.D."/>
            <person name="Fujii C.Y."/>
            <person name="Mason T.M."/>
            <person name="Bowman C.L."/>
            <person name="Barnstead M.E."/>
            <person name="Feldblyum T.V."/>
            <person name="Buell C.R."/>
            <person name="Ketchum K.A."/>
            <person name="Lee J.J."/>
            <person name="Ronning C.M."/>
            <person name="Koo H.L."/>
            <person name="Moffat K.S."/>
            <person name="Cronin L.A."/>
            <person name="Shen M."/>
            <person name="Pai G."/>
            <person name="Van Aken S."/>
            <person name="Umayam L."/>
            <person name="Tallon L.J."/>
            <person name="Gill J.E."/>
            <person name="Adams M.D."/>
            <person name="Carrera A.J."/>
            <person name="Creasy T.H."/>
            <person name="Goodman H.M."/>
            <person name="Somerville C.R."/>
            <person name="Copenhaver G.P."/>
            <person name="Preuss D."/>
            <person name="Nierman W.C."/>
            <person name="White O."/>
            <person name="Eisen J.A."/>
            <person name="Salzberg S.L."/>
            <person name="Fraser C.M."/>
            <person name="Venter J.C."/>
        </authorList>
    </citation>
    <scope>NUCLEOTIDE SEQUENCE [LARGE SCALE GENOMIC DNA]</scope>
    <source>
        <strain>cv. Columbia</strain>
    </source>
</reference>
<reference key="2">
    <citation type="journal article" date="2017" name="Plant J.">
        <title>Araport11: a complete reannotation of the Arabidopsis thaliana reference genome.</title>
        <authorList>
            <person name="Cheng C.Y."/>
            <person name="Krishnakumar V."/>
            <person name="Chan A.P."/>
            <person name="Thibaud-Nissen F."/>
            <person name="Schobel S."/>
            <person name="Town C.D."/>
        </authorList>
    </citation>
    <scope>GENOME REANNOTATION</scope>
    <source>
        <strain>cv. Columbia</strain>
    </source>
</reference>
<reference key="3">
    <citation type="journal article" date="2001" name="BMC Genomics">
        <title>Kinesins in the Arabidopsis genome: a comparative analysis among eukaryotes.</title>
        <authorList>
            <person name="Reddy A.S."/>
            <person name="Day I.S."/>
        </authorList>
    </citation>
    <scope>GENE FAMILY</scope>
</reference>
<reference key="4">
    <citation type="journal article" date="2002" name="Development">
        <title>Mutant alleles of Arabidopsis RADIALLY SWOLLEN 4 and 7 reduce growth anisotropy without altering the transverse orientation of cortical microtubules or cellulose microfibrils.</title>
        <authorList>
            <person name="Wiedemeier A.M."/>
            <person name="Judy-March J.E."/>
            <person name="Hocart C.H."/>
            <person name="Wasteneys G.O."/>
            <person name="Williamson R.E."/>
            <person name="Baskin T.I."/>
        </authorList>
    </citation>
    <scope>DISRUPTION PHENOTYPE</scope>
</reference>
<reference key="5">
    <citation type="journal article" date="2006" name="BMC Genomics">
        <title>Comprehensive comparative analysis of kinesins in photosynthetic eukaryotes.</title>
        <authorList>
            <person name="Richardson D.N."/>
            <person name="Simmons M.P."/>
            <person name="Reddy A.S."/>
        </authorList>
    </citation>
    <scope>GENE FAMILY</scope>
    <scope>NOMENCLATURE</scope>
</reference>
<reference key="6">
    <citation type="journal article" date="2006" name="Trends Plant Sci.">
        <title>Mitosis-specific kinesins in Arabidopsis.</title>
        <authorList>
            <person name="Vanstraelen M."/>
            <person name="Inze D."/>
            <person name="Geelen D."/>
        </authorList>
    </citation>
    <scope>REVIEW</scope>
</reference>
<reference key="7">
    <citation type="journal article" date="2007" name="J. Cell Sci.">
        <title>A conserved role for kinesin-5 in plant mitosis.</title>
        <authorList>
            <person name="Bannigan A."/>
            <person name="Scheible W.R."/>
            <person name="Lukowitz W."/>
            <person name="Fagerstrom C."/>
            <person name="Wadsworth P."/>
            <person name="Somerville C."/>
            <person name="Baskin T.I."/>
        </authorList>
    </citation>
    <scope>FUNCTION</scope>
    <scope>MUTAGENESIS OF GLU-280</scope>
    <scope>SUBCELLULAR LOCATION</scope>
</reference>
<reference key="8">
    <citation type="journal article" date="2012" name="Protoplasma">
        <title>Functions of the Arabidopsis kinesin superfamily of microtubule-based motor proteins.</title>
        <authorList>
            <person name="Zhu C."/>
            <person name="Dixit R."/>
        </authorList>
    </citation>
    <scope>REVIEW</scope>
</reference>
<reference key="9">
    <citation type="journal article" date="2016" name="PLoS ONE">
        <title>A genetic screen for mutations affecting cell division in the Arabidopsis thaliana embryo identifies seven loci required for cytokinesis.</title>
        <authorList>
            <person name="Gillmor C.S."/>
            <person name="Roeder A.H."/>
            <person name="Sieber P."/>
            <person name="Somerville C."/>
            <person name="Lukowitz W."/>
        </authorList>
    </citation>
    <scope>MUTAGENESIS OF GLY-359</scope>
    <scope>FUNCTION</scope>
</reference>
<protein>
    <recommendedName>
        <fullName evidence="12">Kinesin-like protein KIN-5A</fullName>
    </recommendedName>
    <alternativeName>
        <fullName evidence="8">AtKRP125c</fullName>
    </alternativeName>
    <alternativeName>
        <fullName evidence="11">Protein LOOPHOLE</fullName>
    </alternativeName>
    <alternativeName>
        <fullName evidence="9">Protein RADIALLY SWOLLEN 7</fullName>
    </alternativeName>
</protein>
<feature type="chain" id="PRO_0000436268" description="Kinesin-like protein KIN-5A" evidence="2">
    <location>
        <begin position="1"/>
        <end position="1042"/>
    </location>
</feature>
<feature type="domain" description="Kinesin motor" evidence="3">
    <location>
        <begin position="50"/>
        <end position="392"/>
    </location>
</feature>
<feature type="region of interest" description="Disordered" evidence="4">
    <location>
        <begin position="1"/>
        <end position="45"/>
    </location>
</feature>
<feature type="region of interest" description="Disordered" evidence="4">
    <location>
        <begin position="1021"/>
        <end position="1042"/>
    </location>
</feature>
<feature type="coiled-coil region" evidence="2">
    <location>
        <begin position="480"/>
        <end position="517"/>
    </location>
</feature>
<feature type="compositionally biased region" description="Low complexity" evidence="4">
    <location>
        <begin position="1"/>
        <end position="14"/>
    </location>
</feature>
<feature type="compositionally biased region" description="Basic and acidic residues" evidence="4">
    <location>
        <begin position="21"/>
        <end position="31"/>
    </location>
</feature>
<feature type="compositionally biased region" description="Polar residues" evidence="4">
    <location>
        <begin position="32"/>
        <end position="41"/>
    </location>
</feature>
<feature type="binding site" evidence="3">
    <location>
        <begin position="136"/>
        <end position="143"/>
    </location>
    <ligand>
        <name>ATP</name>
        <dbReference type="ChEBI" id="CHEBI:30616"/>
    </ligand>
</feature>
<feature type="mutagenesis site" description="In rsw7-1: Disorganized cortical microtubules during interphase and massive disrupted mitotic spindles." evidence="6">
    <original>E</original>
    <variation>K</variation>
    <location>
        <position position="280"/>
    </location>
</feature>
<feature type="mutagenesis site" description="In rsw7-lph: Short and swollen seedlings. No functional apical meristems and only rudimentary cotyledons. Cellular abnormalities like cell wall stubs or incomplete, gapped cell walls. Affected mitosis in the male gametophyte." evidence="7">
    <original>G</original>
    <variation>R</variation>
    <location>
        <position position="359"/>
    </location>
</feature>
<name>KN5A_ARATH</name>
<dbReference type="EMBL" id="AC007171">
    <property type="protein sequence ID" value="AAD24373.1"/>
    <property type="status" value="ALT_SEQ"/>
    <property type="molecule type" value="Genomic_DNA"/>
</dbReference>
<dbReference type="EMBL" id="CP002685">
    <property type="protein sequence ID" value="AEC08150.1"/>
    <property type="molecule type" value="Genomic_DNA"/>
</dbReference>
<dbReference type="PIR" id="B84687">
    <property type="entry name" value="B84687"/>
</dbReference>
<dbReference type="RefSeq" id="NP_180430.2">
    <property type="nucleotide sequence ID" value="NM_128423.2"/>
</dbReference>
<dbReference type="SMR" id="F4IIS5"/>
<dbReference type="FunCoup" id="F4IIS5">
    <property type="interactions" value="2098"/>
</dbReference>
<dbReference type="STRING" id="3702.F4IIS5"/>
<dbReference type="PaxDb" id="3702-AT2G28620.1"/>
<dbReference type="EnsemblPlants" id="AT2G28620.1">
    <property type="protein sequence ID" value="AT2G28620.1"/>
    <property type="gene ID" value="AT2G28620"/>
</dbReference>
<dbReference type="GeneID" id="817411"/>
<dbReference type="Gramene" id="AT2G28620.1">
    <property type="protein sequence ID" value="AT2G28620.1"/>
    <property type="gene ID" value="AT2G28620"/>
</dbReference>
<dbReference type="KEGG" id="ath:AT2G28620"/>
<dbReference type="Araport" id="AT2G28620"/>
<dbReference type="TAIR" id="AT2G28620">
    <property type="gene designation" value="RSW7"/>
</dbReference>
<dbReference type="eggNOG" id="KOG0243">
    <property type="taxonomic scope" value="Eukaryota"/>
</dbReference>
<dbReference type="HOGENOM" id="CLU_001485_33_0_1"/>
<dbReference type="InParanoid" id="F4IIS5"/>
<dbReference type="OrthoDB" id="3176171at2759"/>
<dbReference type="PRO" id="PR:F4IIS5"/>
<dbReference type="Proteomes" id="UP000006548">
    <property type="component" value="Chromosome 2"/>
</dbReference>
<dbReference type="ExpressionAtlas" id="F4IIS5">
    <property type="expression patterns" value="baseline and differential"/>
</dbReference>
<dbReference type="GO" id="GO:0005737">
    <property type="term" value="C:cytoplasm"/>
    <property type="evidence" value="ECO:0007669"/>
    <property type="project" value="UniProtKB-KW"/>
</dbReference>
<dbReference type="GO" id="GO:0005874">
    <property type="term" value="C:microtubule"/>
    <property type="evidence" value="ECO:0000314"/>
    <property type="project" value="UniProtKB"/>
</dbReference>
<dbReference type="GO" id="GO:0005819">
    <property type="term" value="C:spindle"/>
    <property type="evidence" value="ECO:0000314"/>
    <property type="project" value="UniProtKB"/>
</dbReference>
<dbReference type="GO" id="GO:0005524">
    <property type="term" value="F:ATP binding"/>
    <property type="evidence" value="ECO:0007669"/>
    <property type="project" value="UniProtKB-KW"/>
</dbReference>
<dbReference type="GO" id="GO:0008017">
    <property type="term" value="F:microtubule binding"/>
    <property type="evidence" value="ECO:0007669"/>
    <property type="project" value="InterPro"/>
</dbReference>
<dbReference type="GO" id="GO:0003777">
    <property type="term" value="F:microtubule motor activity"/>
    <property type="evidence" value="ECO:0007669"/>
    <property type="project" value="InterPro"/>
</dbReference>
<dbReference type="GO" id="GO:0043622">
    <property type="term" value="P:cortical microtubule organization"/>
    <property type="evidence" value="ECO:0000315"/>
    <property type="project" value="UniProtKB"/>
</dbReference>
<dbReference type="GO" id="GO:0000911">
    <property type="term" value="P:cytokinesis by cell plate formation"/>
    <property type="evidence" value="ECO:0000315"/>
    <property type="project" value="TAIR"/>
</dbReference>
<dbReference type="GO" id="GO:0007018">
    <property type="term" value="P:microtubule-based movement"/>
    <property type="evidence" value="ECO:0007669"/>
    <property type="project" value="InterPro"/>
</dbReference>
<dbReference type="GO" id="GO:0000281">
    <property type="term" value="P:mitotic cytokinesis"/>
    <property type="evidence" value="ECO:0000315"/>
    <property type="project" value="UniProtKB"/>
</dbReference>
<dbReference type="GO" id="GO:0007052">
    <property type="term" value="P:mitotic spindle organization"/>
    <property type="evidence" value="ECO:0000315"/>
    <property type="project" value="UniProtKB"/>
</dbReference>
<dbReference type="GO" id="GO:0009826">
    <property type="term" value="P:unidimensional cell growth"/>
    <property type="evidence" value="ECO:0000315"/>
    <property type="project" value="TAIR"/>
</dbReference>
<dbReference type="CDD" id="cd01364">
    <property type="entry name" value="KISc_BimC_Eg5"/>
    <property type="match status" value="1"/>
</dbReference>
<dbReference type="FunFam" id="3.40.850.10:FF:000019">
    <property type="entry name" value="Kinesin-like protein KIN-5D"/>
    <property type="match status" value="1"/>
</dbReference>
<dbReference type="Gene3D" id="3.40.850.10">
    <property type="entry name" value="Kinesin motor domain"/>
    <property type="match status" value="1"/>
</dbReference>
<dbReference type="InterPro" id="IPR047149">
    <property type="entry name" value="KIF11-like"/>
</dbReference>
<dbReference type="InterPro" id="IPR047241">
    <property type="entry name" value="KIF11-like_kin_motor_dom"/>
</dbReference>
<dbReference type="InterPro" id="IPR019821">
    <property type="entry name" value="Kinesin_motor_CS"/>
</dbReference>
<dbReference type="InterPro" id="IPR001752">
    <property type="entry name" value="Kinesin_motor_dom"/>
</dbReference>
<dbReference type="InterPro" id="IPR036961">
    <property type="entry name" value="Kinesin_motor_dom_sf"/>
</dbReference>
<dbReference type="InterPro" id="IPR027417">
    <property type="entry name" value="P-loop_NTPase"/>
</dbReference>
<dbReference type="PANTHER" id="PTHR47970">
    <property type="entry name" value="KINESIN-LIKE PROTEIN KIF11"/>
    <property type="match status" value="1"/>
</dbReference>
<dbReference type="PANTHER" id="PTHR47970:SF1">
    <property type="entry name" value="KINESIN-LIKE PROTEIN KIN-5A"/>
    <property type="match status" value="1"/>
</dbReference>
<dbReference type="Pfam" id="PF00225">
    <property type="entry name" value="Kinesin"/>
    <property type="match status" value="1"/>
</dbReference>
<dbReference type="PRINTS" id="PR00380">
    <property type="entry name" value="KINESINHEAVY"/>
</dbReference>
<dbReference type="SMART" id="SM00129">
    <property type="entry name" value="KISc"/>
    <property type="match status" value="1"/>
</dbReference>
<dbReference type="SUPFAM" id="SSF52540">
    <property type="entry name" value="P-loop containing nucleoside triphosphate hydrolases"/>
    <property type="match status" value="1"/>
</dbReference>
<dbReference type="PROSITE" id="PS00411">
    <property type="entry name" value="KINESIN_MOTOR_1"/>
    <property type="match status" value="1"/>
</dbReference>
<dbReference type="PROSITE" id="PS50067">
    <property type="entry name" value="KINESIN_MOTOR_2"/>
    <property type="match status" value="1"/>
</dbReference>
<comment type="function">
    <text evidence="1 6 7">Responsible for microtubule translocation. May be important for the organization of phragmoplast-specific arrays of microtubules (By similarity). Plays an essential role in stabilizing the mitotic spindle (PubMed:17652157). Required during mitotic cytokinesis (PubMed:26745275).</text>
</comment>
<comment type="subcellular location">
    <subcellularLocation>
        <location evidence="6">Cytoplasm</location>
        <location evidence="6">Cytoskeleton</location>
    </subcellularLocation>
    <subcellularLocation>
        <location evidence="6">Cytoplasm</location>
        <location evidence="6">Cytoskeleton</location>
        <location evidence="6">Spindle</location>
    </subcellularLocation>
    <text evidence="6">Microtubule-associated.</text>
</comment>
<comment type="disruption phenotype">
    <text evidence="5">Radially swollen roots without any depletion or disorientation of cortical microtubules or cellulose microfibrils.</text>
</comment>
<comment type="similarity">
    <text evidence="10">Belongs to the TRAFAC class myosin-kinesin ATPase superfamily. Kinesin family. KIN-5/BimC subfamily.</text>
</comment>
<comment type="sequence caution" evidence="12">
    <conflict type="erroneous gene model prediction">
        <sequence resource="EMBL-CDS" id="AAD24373"/>
    </conflict>
</comment>